<gene>
    <name evidence="1" type="primary">hemL</name>
    <name type="ordered locus">AZOSEA09400</name>
    <name type="ORF">ebA1743</name>
</gene>
<protein>
    <recommendedName>
        <fullName evidence="1">Glutamate-1-semialdehyde 2,1-aminomutase</fullName>
        <shortName evidence="1">GSA</shortName>
        <ecNumber evidence="1">5.4.3.8</ecNumber>
    </recommendedName>
    <alternativeName>
        <fullName evidence="1">Glutamate-1-semialdehyde aminotransferase</fullName>
        <shortName evidence="1">GSA-AT</shortName>
    </alternativeName>
</protein>
<sequence length="427" mass="44592">MTSRNETLFQRAQKSIPGGVNSPVRAFRSVGGTPRFISRAEGARVWDADGKAYVDYVGSWGPAIAGHAHPAIVEAVREAALAGLSFGAPSEAEVDIAELICELMPSIEMVRLVSSGTEATMSAIRLARGFTGRDAIVKFEGCYHGHADSLLVKAGSGLLTFGNPSSGGVPADFAKHTIVLDYNDLQQVEDAFRARGGEIAAVIVEAIAGNMNLVKPLPGFLEGLRRLCTEYGVVLIFDEVMTGFRVGPQGVQGLYGIMPDLTTLGKVIGGGMPVGAFGGRRDIMEKIAPLGSVYQAGTLSGSPVAVAAGLASLKLLREPGFYENLGARTTQLVTGLAAAANDAGVTFSADSVGGMFGVYFSAAVPKSFADVMASDRDAFNRFFHAMLDAGHYFAPSAFEAGFVSAAHTAADIDETIAAAREVFARLG</sequence>
<feature type="chain" id="PRO_0000243535" description="Glutamate-1-semialdehyde 2,1-aminomutase">
    <location>
        <begin position="1"/>
        <end position="427"/>
    </location>
</feature>
<feature type="modified residue" description="N6-(pyridoxal phosphate)lysine" evidence="1">
    <location>
        <position position="266"/>
    </location>
</feature>
<accession>Q5P6J6</accession>
<comment type="catalytic activity">
    <reaction evidence="1">
        <text>(S)-4-amino-5-oxopentanoate = 5-aminolevulinate</text>
        <dbReference type="Rhea" id="RHEA:14265"/>
        <dbReference type="ChEBI" id="CHEBI:57501"/>
        <dbReference type="ChEBI" id="CHEBI:356416"/>
        <dbReference type="EC" id="5.4.3.8"/>
    </reaction>
</comment>
<comment type="cofactor">
    <cofactor evidence="1">
        <name>pyridoxal 5'-phosphate</name>
        <dbReference type="ChEBI" id="CHEBI:597326"/>
    </cofactor>
</comment>
<comment type="pathway">
    <text evidence="1">Porphyrin-containing compound metabolism; protoporphyrin-IX biosynthesis; 5-aminolevulinate from L-glutamyl-tRNA(Glu): step 2/2.</text>
</comment>
<comment type="subunit">
    <text evidence="1">Homodimer.</text>
</comment>
<comment type="subcellular location">
    <subcellularLocation>
        <location evidence="1">Cytoplasm</location>
    </subcellularLocation>
</comment>
<comment type="similarity">
    <text evidence="1">Belongs to the class-III pyridoxal-phosphate-dependent aminotransferase family. HemL subfamily.</text>
</comment>
<proteinExistence type="inferred from homology"/>
<keyword id="KW-0963">Cytoplasm</keyword>
<keyword id="KW-0413">Isomerase</keyword>
<keyword id="KW-0627">Porphyrin biosynthesis</keyword>
<keyword id="KW-0663">Pyridoxal phosphate</keyword>
<keyword id="KW-1185">Reference proteome</keyword>
<organism>
    <name type="scientific">Aromatoleum aromaticum (strain DSM 19018 / LMG 30748 / EbN1)</name>
    <name type="common">Azoarcus sp. (strain EbN1)</name>
    <dbReference type="NCBI Taxonomy" id="76114"/>
    <lineage>
        <taxon>Bacteria</taxon>
        <taxon>Pseudomonadati</taxon>
        <taxon>Pseudomonadota</taxon>
        <taxon>Betaproteobacteria</taxon>
        <taxon>Rhodocyclales</taxon>
        <taxon>Rhodocyclaceae</taxon>
        <taxon>Aromatoleum</taxon>
    </lineage>
</organism>
<dbReference type="EC" id="5.4.3.8" evidence="1"/>
<dbReference type="EMBL" id="CR555306">
    <property type="protein sequence ID" value="CAI07065.1"/>
    <property type="molecule type" value="Genomic_DNA"/>
</dbReference>
<dbReference type="RefSeq" id="WP_011236790.1">
    <property type="nucleotide sequence ID" value="NC_006513.1"/>
</dbReference>
<dbReference type="SMR" id="Q5P6J6"/>
<dbReference type="STRING" id="76114.ebA1743"/>
<dbReference type="KEGG" id="eba:ebA1743"/>
<dbReference type="eggNOG" id="COG0001">
    <property type="taxonomic scope" value="Bacteria"/>
</dbReference>
<dbReference type="HOGENOM" id="CLU_016922_1_5_4"/>
<dbReference type="OrthoDB" id="3398487at2"/>
<dbReference type="UniPathway" id="UPA00251">
    <property type="reaction ID" value="UER00317"/>
</dbReference>
<dbReference type="Proteomes" id="UP000006552">
    <property type="component" value="Chromosome"/>
</dbReference>
<dbReference type="GO" id="GO:0005737">
    <property type="term" value="C:cytoplasm"/>
    <property type="evidence" value="ECO:0007669"/>
    <property type="project" value="UniProtKB-SubCell"/>
</dbReference>
<dbReference type="GO" id="GO:0042286">
    <property type="term" value="F:glutamate-1-semialdehyde 2,1-aminomutase activity"/>
    <property type="evidence" value="ECO:0007669"/>
    <property type="project" value="UniProtKB-UniRule"/>
</dbReference>
<dbReference type="GO" id="GO:0030170">
    <property type="term" value="F:pyridoxal phosphate binding"/>
    <property type="evidence" value="ECO:0007669"/>
    <property type="project" value="InterPro"/>
</dbReference>
<dbReference type="GO" id="GO:0008483">
    <property type="term" value="F:transaminase activity"/>
    <property type="evidence" value="ECO:0007669"/>
    <property type="project" value="InterPro"/>
</dbReference>
<dbReference type="GO" id="GO:0006782">
    <property type="term" value="P:protoporphyrinogen IX biosynthetic process"/>
    <property type="evidence" value="ECO:0007669"/>
    <property type="project" value="UniProtKB-UniRule"/>
</dbReference>
<dbReference type="CDD" id="cd00610">
    <property type="entry name" value="OAT_like"/>
    <property type="match status" value="1"/>
</dbReference>
<dbReference type="FunFam" id="3.40.640.10:FF:000021">
    <property type="entry name" value="Glutamate-1-semialdehyde 2,1-aminomutase"/>
    <property type="match status" value="1"/>
</dbReference>
<dbReference type="Gene3D" id="3.90.1150.10">
    <property type="entry name" value="Aspartate Aminotransferase, domain 1"/>
    <property type="match status" value="1"/>
</dbReference>
<dbReference type="Gene3D" id="3.40.640.10">
    <property type="entry name" value="Type I PLP-dependent aspartate aminotransferase-like (Major domain)"/>
    <property type="match status" value="1"/>
</dbReference>
<dbReference type="HAMAP" id="MF_00375">
    <property type="entry name" value="HemL_aminotrans_3"/>
    <property type="match status" value="1"/>
</dbReference>
<dbReference type="InterPro" id="IPR004639">
    <property type="entry name" value="4pyrrol_synth_GluAld_NH2Trfase"/>
</dbReference>
<dbReference type="InterPro" id="IPR005814">
    <property type="entry name" value="Aminotrans_3"/>
</dbReference>
<dbReference type="InterPro" id="IPR049704">
    <property type="entry name" value="Aminotrans_3_PPA_site"/>
</dbReference>
<dbReference type="InterPro" id="IPR015424">
    <property type="entry name" value="PyrdxlP-dep_Trfase"/>
</dbReference>
<dbReference type="InterPro" id="IPR015421">
    <property type="entry name" value="PyrdxlP-dep_Trfase_major"/>
</dbReference>
<dbReference type="InterPro" id="IPR015422">
    <property type="entry name" value="PyrdxlP-dep_Trfase_small"/>
</dbReference>
<dbReference type="NCBIfam" id="TIGR00713">
    <property type="entry name" value="hemL"/>
    <property type="match status" value="1"/>
</dbReference>
<dbReference type="NCBIfam" id="NF000818">
    <property type="entry name" value="PRK00062.1"/>
    <property type="match status" value="1"/>
</dbReference>
<dbReference type="PANTHER" id="PTHR43713">
    <property type="entry name" value="GLUTAMATE-1-SEMIALDEHYDE 2,1-AMINOMUTASE"/>
    <property type="match status" value="1"/>
</dbReference>
<dbReference type="PANTHER" id="PTHR43713:SF3">
    <property type="entry name" value="GLUTAMATE-1-SEMIALDEHYDE 2,1-AMINOMUTASE 1, CHLOROPLASTIC-RELATED"/>
    <property type="match status" value="1"/>
</dbReference>
<dbReference type="Pfam" id="PF00202">
    <property type="entry name" value="Aminotran_3"/>
    <property type="match status" value="1"/>
</dbReference>
<dbReference type="SUPFAM" id="SSF53383">
    <property type="entry name" value="PLP-dependent transferases"/>
    <property type="match status" value="1"/>
</dbReference>
<dbReference type="PROSITE" id="PS00600">
    <property type="entry name" value="AA_TRANSFER_CLASS_3"/>
    <property type="match status" value="1"/>
</dbReference>
<reference key="1">
    <citation type="journal article" date="2005" name="Arch. Microbiol.">
        <title>The genome sequence of an anaerobic aromatic-degrading denitrifying bacterium, strain EbN1.</title>
        <authorList>
            <person name="Rabus R."/>
            <person name="Kube M."/>
            <person name="Heider J."/>
            <person name="Beck A."/>
            <person name="Heitmann K."/>
            <person name="Widdel F."/>
            <person name="Reinhardt R."/>
        </authorList>
    </citation>
    <scope>NUCLEOTIDE SEQUENCE [LARGE SCALE GENOMIC DNA]</scope>
    <source>
        <strain>DSM 19018 / LMG 30748 / EbN1</strain>
    </source>
</reference>
<evidence type="ECO:0000255" key="1">
    <source>
        <dbReference type="HAMAP-Rule" id="MF_00375"/>
    </source>
</evidence>
<name>GSA_AROAE</name>